<comment type="function">
    <text evidence="1">Catalyzes the condensation of isopentenyl diphosphate (IPP) with allylic pyrophosphates generating different type of terpenoids.</text>
</comment>
<comment type="cofactor">
    <cofactor evidence="1">
        <name>Mg(2+)</name>
        <dbReference type="ChEBI" id="CHEBI:18420"/>
    </cofactor>
    <text evidence="1">Binds 2 magnesium ions per subunit.</text>
</comment>
<comment type="subunit">
    <text evidence="1">Homodimer.</text>
</comment>
<comment type="similarity">
    <text evidence="1">Belongs to the UPP synthase family.</text>
</comment>
<comment type="sequence caution" evidence="2">
    <conflict type="erroneous initiation">
        <sequence resource="EMBL-CDS" id="BAC17865"/>
    </conflict>
    <text>Extended N-terminus.</text>
</comment>
<name>ISPT1_COREF</name>
<proteinExistence type="inferred from homology"/>
<sequence>MLNLPRLLYPLYERRLLKELNGARQPGHVAIMCDGNRRWAREAGFVDLSHGHRVGAKKIGELVRWCDDVDVDLVTVYLLSTENLGRDEAELQLLYDIIGDVVAELSLPETNCRVRLVGHLDLLPKEFAERLRGTVCETVDHTGVAVNIAVGYGGRQEIVDAVRDLLTSARDEGKTLDEVIESVDAQAISTHLYTSGQPDPDLVIRTSGEQRLSGFMLWQSAYSEIWFTDTYWPAFRRIDFLRALRDYSQRSRRFGK</sequence>
<reference key="1">
    <citation type="journal article" date="2003" name="Genome Res.">
        <title>Comparative complete genome sequence analysis of the amino acid replacements responsible for the thermostability of Corynebacterium efficiens.</title>
        <authorList>
            <person name="Nishio Y."/>
            <person name="Nakamura Y."/>
            <person name="Kawarabayasi Y."/>
            <person name="Usuda Y."/>
            <person name="Kimura E."/>
            <person name="Sugimoto S."/>
            <person name="Matsui K."/>
            <person name="Yamagishi A."/>
            <person name="Kikuchi H."/>
            <person name="Ikeo K."/>
            <person name="Gojobori T."/>
        </authorList>
    </citation>
    <scope>NUCLEOTIDE SEQUENCE [LARGE SCALE GENOMIC DNA]</scope>
    <source>
        <strain>DSM 44549 / YS-314 / AJ 12310 / JCM 11189 / NBRC 100395</strain>
    </source>
</reference>
<keyword id="KW-0460">Magnesium</keyword>
<keyword id="KW-0479">Metal-binding</keyword>
<keyword id="KW-1185">Reference proteome</keyword>
<keyword id="KW-0808">Transferase</keyword>
<feature type="chain" id="PRO_0000123603" description="Isoprenyl transferase 1">
    <location>
        <begin position="1"/>
        <end position="256"/>
    </location>
</feature>
<feature type="active site" evidence="1">
    <location>
        <position position="34"/>
    </location>
</feature>
<feature type="active site" description="Proton acceptor" evidence="1">
    <location>
        <position position="83"/>
    </location>
</feature>
<feature type="binding site" evidence="1">
    <location>
        <position position="34"/>
    </location>
    <ligand>
        <name>Mg(2+)</name>
        <dbReference type="ChEBI" id="CHEBI:18420"/>
    </ligand>
</feature>
<feature type="binding site" evidence="1">
    <location>
        <begin position="35"/>
        <end position="38"/>
    </location>
    <ligand>
        <name>substrate</name>
    </ligand>
</feature>
<feature type="binding site" evidence="1">
    <location>
        <position position="39"/>
    </location>
    <ligand>
        <name>substrate</name>
    </ligand>
</feature>
<feature type="binding site" evidence="1">
    <location>
        <position position="52"/>
    </location>
    <ligand>
        <name>substrate</name>
    </ligand>
</feature>
<feature type="binding site" evidence="1">
    <location>
        <begin position="80"/>
        <end position="82"/>
    </location>
    <ligand>
        <name>substrate</name>
    </ligand>
</feature>
<feature type="binding site" evidence="1">
    <location>
        <position position="86"/>
    </location>
    <ligand>
        <name>substrate</name>
    </ligand>
</feature>
<feature type="binding site" evidence="1">
    <location>
        <position position="205"/>
    </location>
    <ligand>
        <name>substrate</name>
    </ligand>
</feature>
<feature type="binding site" evidence="1">
    <location>
        <begin position="211"/>
        <end position="213"/>
    </location>
    <ligand>
        <name>substrate</name>
    </ligand>
</feature>
<feature type="binding site" evidence="1">
    <location>
        <position position="224"/>
    </location>
    <ligand>
        <name>Mg(2+)</name>
        <dbReference type="ChEBI" id="CHEBI:18420"/>
    </ligand>
</feature>
<protein>
    <recommendedName>
        <fullName evidence="1">Isoprenyl transferase 1</fullName>
        <ecNumber evidence="1">2.5.1.-</ecNumber>
    </recommendedName>
</protein>
<evidence type="ECO:0000255" key="1">
    <source>
        <dbReference type="HAMAP-Rule" id="MF_01139"/>
    </source>
</evidence>
<evidence type="ECO:0000305" key="2"/>
<gene>
    <name evidence="1" type="primary">uppS1</name>
    <name type="ordered locus">CE1055</name>
</gene>
<dbReference type="EC" id="2.5.1.-" evidence="1"/>
<dbReference type="EMBL" id="BA000035">
    <property type="protein sequence ID" value="BAC17865.1"/>
    <property type="status" value="ALT_INIT"/>
    <property type="molecule type" value="Genomic_DNA"/>
</dbReference>
<dbReference type="RefSeq" id="WP_143758428.1">
    <property type="nucleotide sequence ID" value="NC_004369.1"/>
</dbReference>
<dbReference type="SMR" id="Q8FQR4"/>
<dbReference type="STRING" id="196164.gene:10741463"/>
<dbReference type="KEGG" id="cef:CE1055"/>
<dbReference type="eggNOG" id="COG0020">
    <property type="taxonomic scope" value="Bacteria"/>
</dbReference>
<dbReference type="HOGENOM" id="CLU_038505_2_0_11"/>
<dbReference type="OrthoDB" id="4191603at2"/>
<dbReference type="Proteomes" id="UP000001409">
    <property type="component" value="Chromosome"/>
</dbReference>
<dbReference type="GO" id="GO:0005886">
    <property type="term" value="C:plasma membrane"/>
    <property type="evidence" value="ECO:0007669"/>
    <property type="project" value="TreeGrafter"/>
</dbReference>
<dbReference type="GO" id="GO:0045547">
    <property type="term" value="F:ditrans,polycis-polyprenyl diphosphate synthase [(2E,6E)-farnesyl diphosphate specific] activity"/>
    <property type="evidence" value="ECO:0007669"/>
    <property type="project" value="TreeGrafter"/>
</dbReference>
<dbReference type="GO" id="GO:0000287">
    <property type="term" value="F:magnesium ion binding"/>
    <property type="evidence" value="ECO:0007669"/>
    <property type="project" value="UniProtKB-UniRule"/>
</dbReference>
<dbReference type="GO" id="GO:0033850">
    <property type="term" value="F:Z-farnesyl diphosphate synthase activity"/>
    <property type="evidence" value="ECO:0007669"/>
    <property type="project" value="TreeGrafter"/>
</dbReference>
<dbReference type="GO" id="GO:0016094">
    <property type="term" value="P:polyprenol biosynthetic process"/>
    <property type="evidence" value="ECO:0007669"/>
    <property type="project" value="TreeGrafter"/>
</dbReference>
<dbReference type="CDD" id="cd00475">
    <property type="entry name" value="Cis_IPPS"/>
    <property type="match status" value="1"/>
</dbReference>
<dbReference type="FunFam" id="3.40.1180.10:FF:000003">
    <property type="entry name" value="Isoprenyl transferase 2"/>
    <property type="match status" value="1"/>
</dbReference>
<dbReference type="Gene3D" id="3.40.1180.10">
    <property type="entry name" value="Decaprenyl diphosphate synthase-like"/>
    <property type="match status" value="1"/>
</dbReference>
<dbReference type="HAMAP" id="MF_01139">
    <property type="entry name" value="ISPT"/>
    <property type="match status" value="1"/>
</dbReference>
<dbReference type="InterPro" id="IPR001441">
    <property type="entry name" value="UPP_synth-like"/>
</dbReference>
<dbReference type="InterPro" id="IPR018520">
    <property type="entry name" value="UPP_synth-like_CS"/>
</dbReference>
<dbReference type="InterPro" id="IPR036424">
    <property type="entry name" value="UPP_synth-like_sf"/>
</dbReference>
<dbReference type="NCBIfam" id="NF011403">
    <property type="entry name" value="PRK14828.1"/>
    <property type="match status" value="1"/>
</dbReference>
<dbReference type="NCBIfam" id="TIGR00055">
    <property type="entry name" value="uppS"/>
    <property type="match status" value="1"/>
</dbReference>
<dbReference type="PANTHER" id="PTHR10291:SF43">
    <property type="entry name" value="DEHYDRODOLICHYL DIPHOSPHATE SYNTHASE COMPLEX SUBUNIT DHDDS"/>
    <property type="match status" value="1"/>
</dbReference>
<dbReference type="PANTHER" id="PTHR10291">
    <property type="entry name" value="DEHYDRODOLICHYL DIPHOSPHATE SYNTHASE FAMILY MEMBER"/>
    <property type="match status" value="1"/>
</dbReference>
<dbReference type="Pfam" id="PF01255">
    <property type="entry name" value="Prenyltransf"/>
    <property type="match status" value="1"/>
</dbReference>
<dbReference type="SUPFAM" id="SSF64005">
    <property type="entry name" value="Undecaprenyl diphosphate synthase"/>
    <property type="match status" value="1"/>
</dbReference>
<dbReference type="PROSITE" id="PS01066">
    <property type="entry name" value="UPP_SYNTHASE"/>
    <property type="match status" value="1"/>
</dbReference>
<accession>Q8FQR4</accession>
<organism>
    <name type="scientific">Corynebacterium efficiens (strain DSM 44549 / YS-314 / AJ 12310 / JCM 11189 / NBRC 100395)</name>
    <dbReference type="NCBI Taxonomy" id="196164"/>
    <lineage>
        <taxon>Bacteria</taxon>
        <taxon>Bacillati</taxon>
        <taxon>Actinomycetota</taxon>
        <taxon>Actinomycetes</taxon>
        <taxon>Mycobacteriales</taxon>
        <taxon>Corynebacteriaceae</taxon>
        <taxon>Corynebacterium</taxon>
    </lineage>
</organism>